<feature type="chain" id="PRO_0000262173" description="Phosphatidylserine decarboxylase beta chain" evidence="1">
    <location>
        <begin position="1"/>
        <end position="253"/>
    </location>
</feature>
<feature type="chain" id="PRO_0000262174" description="Phosphatidylserine decarboxylase alpha chain" evidence="1">
    <location>
        <begin position="254"/>
        <end position="293"/>
    </location>
</feature>
<feature type="active site" description="Charge relay system; for autoendoproteolytic cleavage activity" evidence="1">
    <location>
        <position position="90"/>
    </location>
</feature>
<feature type="active site" description="Charge relay system; for autoendoproteolytic cleavage activity" evidence="1">
    <location>
        <position position="147"/>
    </location>
</feature>
<feature type="active site" description="Charge relay system; for autoendoproteolytic cleavage activity" evidence="1">
    <location>
        <position position="254"/>
    </location>
</feature>
<feature type="active site" description="Schiff-base intermediate with substrate; via pyruvic acid; for decarboxylase activity" evidence="1">
    <location>
        <position position="254"/>
    </location>
</feature>
<feature type="site" description="Cleavage (non-hydrolytic); by autocatalysis" evidence="1">
    <location>
        <begin position="253"/>
        <end position="254"/>
    </location>
</feature>
<feature type="modified residue" description="Pyruvic acid (Ser); by autocatalysis" evidence="1">
    <location>
        <position position="254"/>
    </location>
</feature>
<gene>
    <name evidence="1" type="primary">psd</name>
    <name type="ordered locus">YPA_3920</name>
</gene>
<accession>Q1C0Z1</accession>
<organism>
    <name type="scientific">Yersinia pestis bv. Antiqua (strain Antiqua)</name>
    <dbReference type="NCBI Taxonomy" id="360102"/>
    <lineage>
        <taxon>Bacteria</taxon>
        <taxon>Pseudomonadati</taxon>
        <taxon>Pseudomonadota</taxon>
        <taxon>Gammaproteobacteria</taxon>
        <taxon>Enterobacterales</taxon>
        <taxon>Yersiniaceae</taxon>
        <taxon>Yersinia</taxon>
    </lineage>
</organism>
<keyword id="KW-1003">Cell membrane</keyword>
<keyword id="KW-0210">Decarboxylase</keyword>
<keyword id="KW-0444">Lipid biosynthesis</keyword>
<keyword id="KW-0443">Lipid metabolism</keyword>
<keyword id="KW-0456">Lyase</keyword>
<keyword id="KW-0472">Membrane</keyword>
<keyword id="KW-0594">Phospholipid biosynthesis</keyword>
<keyword id="KW-1208">Phospholipid metabolism</keyword>
<keyword id="KW-0670">Pyruvate</keyword>
<keyword id="KW-0865">Zymogen</keyword>
<evidence type="ECO:0000255" key="1">
    <source>
        <dbReference type="HAMAP-Rule" id="MF_00662"/>
    </source>
</evidence>
<name>PSD_YERPA</name>
<comment type="function">
    <text evidence="1">Catalyzes the formation of phosphatidylethanolamine (PtdEtn) from phosphatidylserine (PtdSer).</text>
</comment>
<comment type="catalytic activity">
    <reaction evidence="1">
        <text>a 1,2-diacyl-sn-glycero-3-phospho-L-serine + H(+) = a 1,2-diacyl-sn-glycero-3-phosphoethanolamine + CO2</text>
        <dbReference type="Rhea" id="RHEA:20828"/>
        <dbReference type="ChEBI" id="CHEBI:15378"/>
        <dbReference type="ChEBI" id="CHEBI:16526"/>
        <dbReference type="ChEBI" id="CHEBI:57262"/>
        <dbReference type="ChEBI" id="CHEBI:64612"/>
        <dbReference type="EC" id="4.1.1.65"/>
    </reaction>
</comment>
<comment type="cofactor">
    <cofactor evidence="1">
        <name>pyruvate</name>
        <dbReference type="ChEBI" id="CHEBI:15361"/>
    </cofactor>
    <text evidence="1">Binds 1 pyruvoyl group covalently per subunit.</text>
</comment>
<comment type="pathway">
    <text evidence="1">Phospholipid metabolism; phosphatidylethanolamine biosynthesis; phosphatidylethanolamine from CDP-diacylglycerol: step 2/2.</text>
</comment>
<comment type="subunit">
    <text evidence="1">Heterodimer of a large membrane-associated beta subunit and a small pyruvoyl-containing alpha subunit.</text>
</comment>
<comment type="subcellular location">
    <subcellularLocation>
        <location evidence="1">Cell membrane</location>
        <topology evidence="1">Peripheral membrane protein</topology>
    </subcellularLocation>
</comment>
<comment type="PTM">
    <text evidence="1">Is synthesized initially as an inactive proenzyme. Formation of the active enzyme involves a self-maturation process in which the active site pyruvoyl group is generated from an internal serine residue via an autocatalytic post-translational modification. Two non-identical subunits are generated from the proenzyme in this reaction, and the pyruvate is formed at the N-terminus of the alpha chain, which is derived from the carboxyl end of the proenzyme. The autoendoproteolytic cleavage occurs by a canonical serine protease mechanism, in which the side chain hydroxyl group of the serine supplies its oxygen atom to form the C-terminus of the beta chain, while the remainder of the serine residue undergoes an oxidative deamination to produce ammonia and the pyruvoyl prosthetic group on the alpha chain. During this reaction, the Ser that is part of the protease active site of the proenzyme becomes the pyruvoyl prosthetic group, which constitutes an essential element of the active site of the mature decarboxylase.</text>
</comment>
<comment type="similarity">
    <text evidence="1">Belongs to the phosphatidylserine decarboxylase family. PSD-B subfamily. Prokaryotic type I sub-subfamily.</text>
</comment>
<dbReference type="EC" id="4.1.1.65" evidence="1"/>
<dbReference type="EMBL" id="CP000308">
    <property type="protein sequence ID" value="ABG15881.1"/>
    <property type="molecule type" value="Genomic_DNA"/>
</dbReference>
<dbReference type="SMR" id="Q1C0Z1"/>
<dbReference type="KEGG" id="ypa:YPA_3920"/>
<dbReference type="UniPathway" id="UPA00558">
    <property type="reaction ID" value="UER00616"/>
</dbReference>
<dbReference type="Proteomes" id="UP000001971">
    <property type="component" value="Chromosome"/>
</dbReference>
<dbReference type="GO" id="GO:0005886">
    <property type="term" value="C:plasma membrane"/>
    <property type="evidence" value="ECO:0007669"/>
    <property type="project" value="UniProtKB-SubCell"/>
</dbReference>
<dbReference type="GO" id="GO:0004609">
    <property type="term" value="F:phosphatidylserine decarboxylase activity"/>
    <property type="evidence" value="ECO:0007669"/>
    <property type="project" value="UniProtKB-UniRule"/>
</dbReference>
<dbReference type="GO" id="GO:0006646">
    <property type="term" value="P:phosphatidylethanolamine biosynthetic process"/>
    <property type="evidence" value="ECO:0007669"/>
    <property type="project" value="UniProtKB-UniRule"/>
</dbReference>
<dbReference type="HAMAP" id="MF_00662">
    <property type="entry name" value="PS_decarb_PSD_B_type1"/>
    <property type="match status" value="1"/>
</dbReference>
<dbReference type="InterPro" id="IPR003817">
    <property type="entry name" value="PS_Dcarbxylase"/>
</dbReference>
<dbReference type="InterPro" id="IPR033177">
    <property type="entry name" value="PSD-B"/>
</dbReference>
<dbReference type="InterPro" id="IPR033178">
    <property type="entry name" value="PSD_type1_pro"/>
</dbReference>
<dbReference type="NCBIfam" id="TIGR00163">
    <property type="entry name" value="PS_decarb"/>
    <property type="match status" value="1"/>
</dbReference>
<dbReference type="PANTHER" id="PTHR10067">
    <property type="entry name" value="PHOSPHATIDYLSERINE DECARBOXYLASE"/>
    <property type="match status" value="1"/>
</dbReference>
<dbReference type="PANTHER" id="PTHR10067:SF6">
    <property type="entry name" value="PHOSPHATIDYLSERINE DECARBOXYLASE PROENZYME, MITOCHONDRIAL"/>
    <property type="match status" value="1"/>
</dbReference>
<dbReference type="Pfam" id="PF02666">
    <property type="entry name" value="PS_Dcarbxylase"/>
    <property type="match status" value="1"/>
</dbReference>
<protein>
    <recommendedName>
        <fullName evidence="1">Phosphatidylserine decarboxylase proenzyme</fullName>
        <ecNumber evidence="1">4.1.1.65</ecNumber>
    </recommendedName>
    <component>
        <recommendedName>
            <fullName evidence="1">Phosphatidylserine decarboxylase alpha chain</fullName>
        </recommendedName>
    </component>
    <component>
        <recommendedName>
            <fullName evidence="1">Phosphatidylserine decarboxylase beta chain</fullName>
        </recommendedName>
    </component>
</protein>
<reference key="1">
    <citation type="journal article" date="2006" name="J. Bacteriol.">
        <title>Complete genome sequence of Yersinia pestis strains Antiqua and Nepal516: evidence of gene reduction in an emerging pathogen.</title>
        <authorList>
            <person name="Chain P.S.G."/>
            <person name="Hu P."/>
            <person name="Malfatti S.A."/>
            <person name="Radnedge L."/>
            <person name="Larimer F."/>
            <person name="Vergez L.M."/>
            <person name="Worsham P."/>
            <person name="Chu M.C."/>
            <person name="Andersen G.L."/>
        </authorList>
    </citation>
    <scope>NUCLEOTIDE SEQUENCE [LARGE SCALE GENOMIC DNA]</scope>
    <source>
        <strain>Antiqua</strain>
    </source>
</reference>
<proteinExistence type="inferred from homology"/>
<sequence length="293" mass="32235">MLDSIKIKLQYLLPKQGLTQLAGWGANKQGGWLTQLVIKAFARYYKVDMKEAQDPEFSAYRTFNEFFVRPLRAGVRPVVAEENLLAQPADGAISQLGAIREGQILQAKGHNYSLEALLAGNYLLAAEFQNGQFVTTYLAPRDYHRVHMPCDGVLREMIYVPGDLFSVNPLTAANVPNLFARNERVICIFDTAFGPMAQILVGATIVGSIETVWAGTITPPREGVIRRWTYPQAGCEGAITLEKGQEMGRFKLGSTVINLFAEGKVYFAPQLNSGAVTRMGEVLAEAVPTTPSY</sequence>